<keyword id="KW-0687">Ribonucleoprotein</keyword>
<keyword id="KW-0689">Ribosomal protein</keyword>
<keyword id="KW-0694">RNA-binding</keyword>
<keyword id="KW-0699">rRNA-binding</keyword>
<protein>
    <recommendedName>
        <fullName evidence="1">Large ribosomal subunit protein uL14</fullName>
    </recommendedName>
    <alternativeName>
        <fullName evidence="2">50S ribosomal protein L14</fullName>
    </alternativeName>
</protein>
<feature type="chain" id="PRO_1000055631" description="Large ribosomal subunit protein uL14">
    <location>
        <begin position="1"/>
        <end position="132"/>
    </location>
</feature>
<proteinExistence type="inferred from homology"/>
<organism>
    <name type="scientific">Methanococcus maripaludis (strain C7 / ATCC BAA-1331)</name>
    <dbReference type="NCBI Taxonomy" id="426368"/>
    <lineage>
        <taxon>Archaea</taxon>
        <taxon>Methanobacteriati</taxon>
        <taxon>Methanobacteriota</taxon>
        <taxon>Methanomada group</taxon>
        <taxon>Methanococci</taxon>
        <taxon>Methanococcales</taxon>
        <taxon>Methanococcaceae</taxon>
        <taxon>Methanococcus</taxon>
    </lineage>
</organism>
<accession>A6VGZ5</accession>
<sequence>MKGLGSTIVRSLPNGARLVCADNTGAKELEIIAVKNYTGTVRRLPAGGVGHMVFVSVKKGTPEMRKQVLPAIIIRQKKEYKRADGTRVKFEDNAAVIVTPEGTPKGSEIKGPVSKEAAERWPGVSRLAKIIH</sequence>
<comment type="function">
    <text evidence="1">Binds to 23S rRNA. Forms part of two intersubunit bridges in the 70S ribosome.</text>
</comment>
<comment type="subunit">
    <text evidence="1">Part of the 50S ribosomal subunit. Forms a cluster with proteins L3 and L24e, part of which may contact the 16S rRNA in 2 intersubunit bridges.</text>
</comment>
<comment type="similarity">
    <text evidence="1">Belongs to the universal ribosomal protein uL14 family.</text>
</comment>
<dbReference type="EMBL" id="CP000745">
    <property type="protein sequence ID" value="ABR65721.1"/>
    <property type="molecule type" value="Genomic_DNA"/>
</dbReference>
<dbReference type="SMR" id="A6VGZ5"/>
<dbReference type="STRING" id="426368.MmarC7_0654"/>
<dbReference type="KEGG" id="mmz:MmarC7_0654"/>
<dbReference type="eggNOG" id="arCOG04095">
    <property type="taxonomic scope" value="Archaea"/>
</dbReference>
<dbReference type="HOGENOM" id="CLU_095071_3_1_2"/>
<dbReference type="OrthoDB" id="23569at2157"/>
<dbReference type="GO" id="GO:0022625">
    <property type="term" value="C:cytosolic large ribosomal subunit"/>
    <property type="evidence" value="ECO:0007669"/>
    <property type="project" value="TreeGrafter"/>
</dbReference>
<dbReference type="GO" id="GO:0070180">
    <property type="term" value="F:large ribosomal subunit rRNA binding"/>
    <property type="evidence" value="ECO:0007669"/>
    <property type="project" value="TreeGrafter"/>
</dbReference>
<dbReference type="GO" id="GO:0003735">
    <property type="term" value="F:structural constituent of ribosome"/>
    <property type="evidence" value="ECO:0007669"/>
    <property type="project" value="InterPro"/>
</dbReference>
<dbReference type="GO" id="GO:0006412">
    <property type="term" value="P:translation"/>
    <property type="evidence" value="ECO:0007669"/>
    <property type="project" value="UniProtKB-UniRule"/>
</dbReference>
<dbReference type="CDD" id="cd00337">
    <property type="entry name" value="Ribosomal_uL14"/>
    <property type="match status" value="1"/>
</dbReference>
<dbReference type="FunFam" id="2.40.150.20:FF:000007">
    <property type="entry name" value="50S ribosomal protein L14"/>
    <property type="match status" value="1"/>
</dbReference>
<dbReference type="Gene3D" id="2.40.150.20">
    <property type="entry name" value="Ribosomal protein L14"/>
    <property type="match status" value="1"/>
</dbReference>
<dbReference type="HAMAP" id="MF_01367">
    <property type="entry name" value="Ribosomal_uL14"/>
    <property type="match status" value="1"/>
</dbReference>
<dbReference type="InterPro" id="IPR000218">
    <property type="entry name" value="Ribosomal_uL14"/>
</dbReference>
<dbReference type="InterPro" id="IPR019971">
    <property type="entry name" value="Ribosomal_uL14_arc"/>
</dbReference>
<dbReference type="InterPro" id="IPR019972">
    <property type="entry name" value="Ribosomal_uL14_CS"/>
</dbReference>
<dbReference type="InterPro" id="IPR036853">
    <property type="entry name" value="Ribosomal_uL14_sf"/>
</dbReference>
<dbReference type="NCBIfam" id="NF006344">
    <property type="entry name" value="PRK08571.1"/>
    <property type="match status" value="1"/>
</dbReference>
<dbReference type="NCBIfam" id="TIGR03673">
    <property type="entry name" value="uL14_arch"/>
    <property type="match status" value="1"/>
</dbReference>
<dbReference type="PANTHER" id="PTHR11761">
    <property type="entry name" value="50S/60S RIBOSOMAL PROTEIN L14/L23"/>
    <property type="match status" value="1"/>
</dbReference>
<dbReference type="PANTHER" id="PTHR11761:SF8">
    <property type="entry name" value="LARGE RIBOSOMAL SUBUNIT PROTEIN UL14"/>
    <property type="match status" value="1"/>
</dbReference>
<dbReference type="Pfam" id="PF00238">
    <property type="entry name" value="Ribosomal_L14"/>
    <property type="match status" value="1"/>
</dbReference>
<dbReference type="SMART" id="SM01374">
    <property type="entry name" value="Ribosomal_L14"/>
    <property type="match status" value="1"/>
</dbReference>
<dbReference type="SUPFAM" id="SSF50193">
    <property type="entry name" value="Ribosomal protein L14"/>
    <property type="match status" value="1"/>
</dbReference>
<dbReference type="PROSITE" id="PS00049">
    <property type="entry name" value="RIBOSOMAL_L14"/>
    <property type="match status" value="1"/>
</dbReference>
<gene>
    <name evidence="1" type="primary">rpl14</name>
    <name type="ordered locus">MmarC7_0654</name>
</gene>
<reference key="1">
    <citation type="submission" date="2007-06" db="EMBL/GenBank/DDBJ databases">
        <title>Complete sequence of Methanococcus maripaludis C7.</title>
        <authorList>
            <consortium name="US DOE Joint Genome Institute"/>
            <person name="Copeland A."/>
            <person name="Lucas S."/>
            <person name="Lapidus A."/>
            <person name="Barry K."/>
            <person name="Glavina del Rio T."/>
            <person name="Dalin E."/>
            <person name="Tice H."/>
            <person name="Pitluck S."/>
            <person name="Clum A."/>
            <person name="Schmutz J."/>
            <person name="Larimer F."/>
            <person name="Land M."/>
            <person name="Hauser L."/>
            <person name="Kyrpides N."/>
            <person name="Anderson I."/>
            <person name="Sieprawska-Lupa M."/>
            <person name="Whitman W.B."/>
            <person name="Richardson P."/>
        </authorList>
    </citation>
    <scope>NUCLEOTIDE SEQUENCE [LARGE SCALE GENOMIC DNA]</scope>
    <source>
        <strain>C7 / ATCC BAA-1331</strain>
    </source>
</reference>
<evidence type="ECO:0000255" key="1">
    <source>
        <dbReference type="HAMAP-Rule" id="MF_01367"/>
    </source>
</evidence>
<evidence type="ECO:0000305" key="2"/>
<name>RL14_METM7</name>